<sequence>MVTQNKKILIITGSFGNGHMQVTQSIVNQLNDMNLDHLSVIEHDLFMEAHPILTSICKKWYINSFKYFRNMYKGFYYSRPDKLDKCFYKYYGLNKLINLLIKEKPDLILLTFPTPVMSVLTEQFNINIPVATVMTDYRLHKNWITPYSTRYYVATKETKQDFIDVGIDPSTVKVTGIPIDNKFETPINQKQWLIDNNLDPDKQTILMSAGAFGVSKGFDTMITDILAKSANAQVVMICGKSKELKRSLTAKFKSNENVLILGYTKHMNEWMASSQLMITKPGGITITEGFARCIPMIFLNPAPGQELENALYFEEKGFGKIADTPEEAIKIVASLTNGNEQLTNMISTMEQDKIKYATQTICRDLLDLIGHSSQPQEIYGKVPLYARFFVK</sequence>
<proteinExistence type="inferred from homology"/>
<reference key="1">
    <citation type="journal article" date="2008" name="J. Bacteriol.">
        <title>Genome sequence of Staphylococcus aureus strain Newman and comparative analysis of staphylococcal genomes: polymorphism and evolution of two major pathogenicity islands.</title>
        <authorList>
            <person name="Baba T."/>
            <person name="Bae T."/>
            <person name="Schneewind O."/>
            <person name="Takeuchi F."/>
            <person name="Hiramatsu K."/>
        </authorList>
    </citation>
    <scope>NUCLEOTIDE SEQUENCE [LARGE SCALE GENOMIC DNA]</scope>
    <source>
        <strain>Newman</strain>
    </source>
</reference>
<keyword id="KW-0119">Carbohydrate metabolism</keyword>
<keyword id="KW-1003">Cell membrane</keyword>
<keyword id="KW-0328">Glycosyltransferase</keyword>
<keyword id="KW-0444">Lipid biosynthesis</keyword>
<keyword id="KW-0443">Lipid metabolism</keyword>
<keyword id="KW-0472">Membrane</keyword>
<keyword id="KW-0808">Transferase</keyword>
<evidence type="ECO:0000255" key="1">
    <source>
        <dbReference type="HAMAP-Rule" id="MF_01280"/>
    </source>
</evidence>
<feature type="chain" id="PRO_1000073185" description="Processive diacylglycerol beta-glucosyltransferase">
    <location>
        <begin position="1"/>
        <end position="391"/>
    </location>
</feature>
<organism>
    <name type="scientific">Staphylococcus aureus (strain Newman)</name>
    <dbReference type="NCBI Taxonomy" id="426430"/>
    <lineage>
        <taxon>Bacteria</taxon>
        <taxon>Bacillati</taxon>
        <taxon>Bacillota</taxon>
        <taxon>Bacilli</taxon>
        <taxon>Bacillales</taxon>
        <taxon>Staphylococcaceae</taxon>
        <taxon>Staphylococcus</taxon>
    </lineage>
</organism>
<protein>
    <recommendedName>
        <fullName evidence="1">Processive diacylglycerol beta-glucosyltransferase</fullName>
        <ecNumber>2.4.1.315</ecNumber>
    </recommendedName>
    <alternativeName>
        <fullName evidence="1">Beta-diglucosyldiacylglycerol synthase</fullName>
        <shortName evidence="1">Beta-DGS</shortName>
        <shortName evidence="1">DGlcDAG synthase</shortName>
        <shortName evidence="1">Glc2-DAG synthase</shortName>
    </alternativeName>
    <alternativeName>
        <fullName evidence="1">Beta-gentiobiosyldiacylglycerol synthase</fullName>
    </alternativeName>
    <alternativeName>
        <fullName evidence="1">Beta-monoglucosyldiacylglycerol synthase</fullName>
        <shortName evidence="1">Beta-MGS</shortName>
        <shortName evidence="1">MGlcDAG synthase</shortName>
    </alternativeName>
    <alternativeName>
        <fullName>Diglucosyl diacylglycerol synthase (1,6-linking)</fullName>
    </alternativeName>
    <alternativeName>
        <fullName evidence="1">Glucosyl-beta-1,6-glucosyldiacylglycerol synthase</fullName>
    </alternativeName>
    <alternativeName>
        <fullName evidence="1">UDP glucosyltransferase</fullName>
    </alternativeName>
    <alternativeName>
        <fullName evidence="1">UDP-glucose:1,2-diacylglycerol-3-beta-D-glucosyltransferase</fullName>
    </alternativeName>
</protein>
<name>UGTP_STAAE</name>
<accession>A6QFM7</accession>
<dbReference type="EC" id="2.4.1.315"/>
<dbReference type="EMBL" id="AP009351">
    <property type="protein sequence ID" value="BAF67159.1"/>
    <property type="molecule type" value="Genomic_DNA"/>
</dbReference>
<dbReference type="RefSeq" id="WP_000258650.1">
    <property type="nucleotide sequence ID" value="NZ_JBBIAE010000002.1"/>
</dbReference>
<dbReference type="SMR" id="A6QFM7"/>
<dbReference type="CAZy" id="GT28">
    <property type="family name" value="Glycosyltransferase Family 28"/>
</dbReference>
<dbReference type="KEGG" id="sae:NWMN_0887"/>
<dbReference type="HOGENOM" id="CLU_028367_0_1_9"/>
<dbReference type="UniPathway" id="UPA00894"/>
<dbReference type="Proteomes" id="UP000006386">
    <property type="component" value="Chromosome"/>
</dbReference>
<dbReference type="GO" id="GO:0005886">
    <property type="term" value="C:plasma membrane"/>
    <property type="evidence" value="ECO:0007669"/>
    <property type="project" value="UniProtKB-SubCell"/>
</dbReference>
<dbReference type="GO" id="GO:0047228">
    <property type="term" value="F:1,2-diacylglycerol 3-glucosyltransferase activity"/>
    <property type="evidence" value="ECO:0007669"/>
    <property type="project" value="UniProtKB-UniRule"/>
</dbReference>
<dbReference type="GO" id="GO:0009246">
    <property type="term" value="P:enterobacterial common antigen biosynthetic process"/>
    <property type="evidence" value="ECO:0007669"/>
    <property type="project" value="UniProtKB-UniPathway"/>
</dbReference>
<dbReference type="GO" id="GO:0009247">
    <property type="term" value="P:glycolipid biosynthetic process"/>
    <property type="evidence" value="ECO:0007669"/>
    <property type="project" value="UniProtKB-UniRule"/>
</dbReference>
<dbReference type="GO" id="GO:0070395">
    <property type="term" value="P:lipoteichoic acid biosynthetic process"/>
    <property type="evidence" value="ECO:0007669"/>
    <property type="project" value="UniProtKB-UniRule"/>
</dbReference>
<dbReference type="CDD" id="cd17507">
    <property type="entry name" value="GT28_Beta-DGS-like"/>
    <property type="match status" value="1"/>
</dbReference>
<dbReference type="Gene3D" id="3.40.50.2000">
    <property type="entry name" value="Glycogen Phosphorylase B"/>
    <property type="match status" value="2"/>
</dbReference>
<dbReference type="HAMAP" id="MF_01280">
    <property type="entry name" value="Diacylglyc_glucosyltr"/>
    <property type="match status" value="1"/>
</dbReference>
<dbReference type="InterPro" id="IPR009695">
    <property type="entry name" value="Diacylglyc_glucosyltr_N"/>
</dbReference>
<dbReference type="InterPro" id="IPR007235">
    <property type="entry name" value="Glyco_trans_28_C"/>
</dbReference>
<dbReference type="InterPro" id="IPR050519">
    <property type="entry name" value="Glycosyltransf_28_UgtP"/>
</dbReference>
<dbReference type="InterPro" id="IPR023589">
    <property type="entry name" value="Pro_diacylglycrl_glcsylTrfase"/>
</dbReference>
<dbReference type="NCBIfam" id="NF010134">
    <property type="entry name" value="PRK13608.1"/>
    <property type="match status" value="1"/>
</dbReference>
<dbReference type="PANTHER" id="PTHR43025">
    <property type="entry name" value="MONOGALACTOSYLDIACYLGLYCEROL SYNTHASE"/>
    <property type="match status" value="1"/>
</dbReference>
<dbReference type="PANTHER" id="PTHR43025:SF3">
    <property type="entry name" value="MONOGALACTOSYLDIACYLGLYCEROL SYNTHASE 1, CHLOROPLASTIC"/>
    <property type="match status" value="1"/>
</dbReference>
<dbReference type="Pfam" id="PF04101">
    <property type="entry name" value="Glyco_tran_28_C"/>
    <property type="match status" value="1"/>
</dbReference>
<dbReference type="Pfam" id="PF06925">
    <property type="entry name" value="MGDG_synth"/>
    <property type="match status" value="1"/>
</dbReference>
<dbReference type="SUPFAM" id="SSF53756">
    <property type="entry name" value="UDP-Glycosyltransferase/glycogen phosphorylase"/>
    <property type="match status" value="1"/>
</dbReference>
<comment type="function">
    <text evidence="1">Processive glucosyltransferase involved in the biosynthesis of both the bilayer- and non-bilayer-forming membrane glucolipids. Is able to successively transfer two glucosyl residues to diacylglycerol (DAG), thereby catalyzing the formation of beta-monoglucosyl-DAG (3-O-(beta-D-glucopyranosyl)-1,2-diacyl-sn-glycerol) and beta-diglucosyl-DAG (3-O-(beta-D-glucopyranosyl-beta-(1-&gt;6)-D-glucopyranosyl)-1,2-diacyl-sn-glycerol). Beta-diglucosyl-DAG is the predominant glycolipid found in Bacillales and is also used as a membrane anchor for lipoteichoic acid (LTA).</text>
</comment>
<comment type="catalytic activity">
    <reaction>
        <text>a 1,2-diacyl-3-O-(beta-D-glucopyranosyl)-sn-glycerol + UDP-alpha-D-glucose = a 1,2-diacyl-3-O-(beta-D-Glc-(1-&gt;6)-beta-D-Glc)-sn-glycerol + UDP + H(+)</text>
        <dbReference type="Rhea" id="RHEA:39031"/>
        <dbReference type="ChEBI" id="CHEBI:15378"/>
        <dbReference type="ChEBI" id="CHEBI:58223"/>
        <dbReference type="ChEBI" id="CHEBI:58885"/>
        <dbReference type="ChEBI" id="CHEBI:75799"/>
        <dbReference type="ChEBI" id="CHEBI:76264"/>
        <dbReference type="EC" id="2.4.1.315"/>
    </reaction>
</comment>
<comment type="catalytic activity">
    <reaction evidence="1">
        <text>a 1,2-diacyl-sn-glycerol + UDP-alpha-D-glucose = a 1,2-diacyl-3-O-(beta-D-glucopyranosyl)-sn-glycerol + UDP + H(+)</text>
        <dbReference type="Rhea" id="RHEA:17285"/>
        <dbReference type="ChEBI" id="CHEBI:15378"/>
        <dbReference type="ChEBI" id="CHEBI:17815"/>
        <dbReference type="ChEBI" id="CHEBI:58223"/>
        <dbReference type="ChEBI" id="CHEBI:58885"/>
        <dbReference type="ChEBI" id="CHEBI:75799"/>
    </reaction>
</comment>
<comment type="pathway">
    <text evidence="1">Glycolipid metabolism; diglucosyl-diacylglycerol biosynthesis.</text>
</comment>
<comment type="subcellular location">
    <subcellularLocation>
        <location evidence="1">Cell membrane</location>
    </subcellularLocation>
</comment>
<comment type="similarity">
    <text evidence="1">Belongs to the glycosyltransferase 28 family. UgtP subfamily.</text>
</comment>
<gene>
    <name evidence="1" type="primary">ugtP</name>
    <name type="ordered locus">NWMN_0887</name>
</gene>